<organism>
    <name type="scientific">Methanocaldococcus jannaschii (strain ATCC 43067 / DSM 2661 / JAL-1 / JCM 10045 / NBRC 100440)</name>
    <name type="common">Methanococcus jannaschii</name>
    <dbReference type="NCBI Taxonomy" id="243232"/>
    <lineage>
        <taxon>Archaea</taxon>
        <taxon>Methanobacteriati</taxon>
        <taxon>Methanobacteriota</taxon>
        <taxon>Methanomada group</taxon>
        <taxon>Methanococci</taxon>
        <taxon>Methanococcales</taxon>
        <taxon>Methanocaldococcaceae</taxon>
        <taxon>Methanocaldococcus</taxon>
    </lineage>
</organism>
<gene>
    <name type="ordered locus">MJ1414</name>
</gene>
<proteinExistence type="predicted"/>
<keyword id="KW-1185">Reference proteome</keyword>
<protein>
    <recommendedName>
        <fullName>Uncharacterized protein MJ1414</fullName>
    </recommendedName>
</protein>
<sequence length="241" mass="27861">MSPMRWAIFLVLLTITFSGCLNKEISKEEIIKKIDEINTFSYNAKVFINLSVSNPAINKVNMKMDIDGYSDGKLSKGIIHVYYTVRYFNGRNETIPFYVNEEGTFIKLEGKWQKITNNDLSNHTWNILAYIKDLIEKNDIKIEEENNHYIIRLKDENAEKQLNPFFYRGIKIPGINLKISEEEVVIILDKYGTPIKVIKKGKLYGTSSKGNLDGVIVIETEIKDINKDFDFSIPEDLSIYN</sequence>
<reference key="1">
    <citation type="journal article" date="1996" name="Science">
        <title>Complete genome sequence of the methanogenic archaeon, Methanococcus jannaschii.</title>
        <authorList>
            <person name="Bult C.J."/>
            <person name="White O."/>
            <person name="Olsen G.J."/>
            <person name="Zhou L."/>
            <person name="Fleischmann R.D."/>
            <person name="Sutton G.G."/>
            <person name="Blake J.A."/>
            <person name="FitzGerald L.M."/>
            <person name="Clayton R.A."/>
            <person name="Gocayne J.D."/>
            <person name="Kerlavage A.R."/>
            <person name="Dougherty B.A."/>
            <person name="Tomb J.-F."/>
            <person name="Adams M.D."/>
            <person name="Reich C.I."/>
            <person name="Overbeek R."/>
            <person name="Kirkness E.F."/>
            <person name="Weinstock K.G."/>
            <person name="Merrick J.M."/>
            <person name="Glodek A."/>
            <person name="Scott J.L."/>
            <person name="Geoghagen N.S.M."/>
            <person name="Weidman J.F."/>
            <person name="Fuhrmann J.L."/>
            <person name="Nguyen D."/>
            <person name="Utterback T.R."/>
            <person name="Kelley J.M."/>
            <person name="Peterson J.D."/>
            <person name="Sadow P.W."/>
            <person name="Hanna M.C."/>
            <person name="Cotton M.D."/>
            <person name="Roberts K.M."/>
            <person name="Hurst M.A."/>
            <person name="Kaine B.P."/>
            <person name="Borodovsky M."/>
            <person name="Klenk H.-P."/>
            <person name="Fraser C.M."/>
            <person name="Smith H.O."/>
            <person name="Woese C.R."/>
            <person name="Venter J.C."/>
        </authorList>
    </citation>
    <scope>NUCLEOTIDE SEQUENCE [LARGE SCALE GENOMIC DNA]</scope>
    <source>
        <strain>ATCC 43067 / DSM 2661 / JAL-1 / JCM 10045 / NBRC 100440</strain>
    </source>
</reference>
<dbReference type="EMBL" id="L77117">
    <property type="protein sequence ID" value="AAB99424.1"/>
    <property type="molecule type" value="Genomic_DNA"/>
</dbReference>
<dbReference type="PIR" id="E64476">
    <property type="entry name" value="E64476"/>
</dbReference>
<dbReference type="STRING" id="243232.MJ_1414"/>
<dbReference type="PaxDb" id="243232-MJ_1414"/>
<dbReference type="EnsemblBacteria" id="AAB99424">
    <property type="protein sequence ID" value="AAB99424"/>
    <property type="gene ID" value="MJ_1414"/>
</dbReference>
<dbReference type="KEGG" id="mja:MJ_1414"/>
<dbReference type="eggNOG" id="arCOG07627">
    <property type="taxonomic scope" value="Archaea"/>
</dbReference>
<dbReference type="HOGENOM" id="CLU_1145239_0_0_2"/>
<dbReference type="InParanoid" id="Q58809"/>
<dbReference type="OrthoDB" id="377232at2157"/>
<dbReference type="Proteomes" id="UP000000805">
    <property type="component" value="Chromosome"/>
</dbReference>
<dbReference type="PROSITE" id="PS51257">
    <property type="entry name" value="PROKAR_LIPOPROTEIN"/>
    <property type="match status" value="1"/>
</dbReference>
<feature type="chain" id="PRO_0000107315" description="Uncharacterized protein MJ1414">
    <location>
        <begin position="1"/>
        <end position="241"/>
    </location>
</feature>
<name>Y1414_METJA</name>
<accession>Q58809</accession>